<comment type="function">
    <text evidence="1">Catalyzes the reversible phosphorylation of UMP to UDP.</text>
</comment>
<comment type="catalytic activity">
    <reaction evidence="1">
        <text>UMP + ATP = UDP + ADP</text>
        <dbReference type="Rhea" id="RHEA:24400"/>
        <dbReference type="ChEBI" id="CHEBI:30616"/>
        <dbReference type="ChEBI" id="CHEBI:57865"/>
        <dbReference type="ChEBI" id="CHEBI:58223"/>
        <dbReference type="ChEBI" id="CHEBI:456216"/>
        <dbReference type="EC" id="2.7.4.22"/>
    </reaction>
</comment>
<comment type="activity regulation">
    <text evidence="1">Allosterically activated by GTP. Inhibited by UTP.</text>
</comment>
<comment type="pathway">
    <text evidence="1">Pyrimidine metabolism; CTP biosynthesis via de novo pathway; UDP from UMP (UMPK route): step 1/1.</text>
</comment>
<comment type="subunit">
    <text evidence="1">Homohexamer.</text>
</comment>
<comment type="subcellular location">
    <subcellularLocation>
        <location evidence="1">Cytoplasm</location>
    </subcellularLocation>
</comment>
<comment type="similarity">
    <text evidence="1">Belongs to the UMP kinase family.</text>
</comment>
<name>PYRH_SHEPC</name>
<dbReference type="EC" id="2.7.4.22" evidence="1"/>
<dbReference type="EMBL" id="CP000681">
    <property type="protein sequence ID" value="ABP75078.1"/>
    <property type="molecule type" value="Genomic_DNA"/>
</dbReference>
<dbReference type="SMR" id="A4Y545"/>
<dbReference type="STRING" id="319224.Sputcn32_1350"/>
<dbReference type="KEGG" id="spc:Sputcn32_1350"/>
<dbReference type="eggNOG" id="COG0528">
    <property type="taxonomic scope" value="Bacteria"/>
</dbReference>
<dbReference type="HOGENOM" id="CLU_033861_0_0_6"/>
<dbReference type="UniPathway" id="UPA00159">
    <property type="reaction ID" value="UER00275"/>
</dbReference>
<dbReference type="GO" id="GO:0005829">
    <property type="term" value="C:cytosol"/>
    <property type="evidence" value="ECO:0007669"/>
    <property type="project" value="TreeGrafter"/>
</dbReference>
<dbReference type="GO" id="GO:0005524">
    <property type="term" value="F:ATP binding"/>
    <property type="evidence" value="ECO:0007669"/>
    <property type="project" value="UniProtKB-KW"/>
</dbReference>
<dbReference type="GO" id="GO:0033862">
    <property type="term" value="F:UMP kinase activity"/>
    <property type="evidence" value="ECO:0007669"/>
    <property type="project" value="UniProtKB-EC"/>
</dbReference>
<dbReference type="GO" id="GO:0044210">
    <property type="term" value="P:'de novo' CTP biosynthetic process"/>
    <property type="evidence" value="ECO:0007669"/>
    <property type="project" value="UniProtKB-UniRule"/>
</dbReference>
<dbReference type="GO" id="GO:0006225">
    <property type="term" value="P:UDP biosynthetic process"/>
    <property type="evidence" value="ECO:0007669"/>
    <property type="project" value="TreeGrafter"/>
</dbReference>
<dbReference type="CDD" id="cd04254">
    <property type="entry name" value="AAK_UMPK-PyrH-Ec"/>
    <property type="match status" value="1"/>
</dbReference>
<dbReference type="FunFam" id="3.40.1160.10:FF:000001">
    <property type="entry name" value="Uridylate kinase"/>
    <property type="match status" value="1"/>
</dbReference>
<dbReference type="Gene3D" id="3.40.1160.10">
    <property type="entry name" value="Acetylglutamate kinase-like"/>
    <property type="match status" value="1"/>
</dbReference>
<dbReference type="HAMAP" id="MF_01220_B">
    <property type="entry name" value="PyrH_B"/>
    <property type="match status" value="1"/>
</dbReference>
<dbReference type="InterPro" id="IPR036393">
    <property type="entry name" value="AceGlu_kinase-like_sf"/>
</dbReference>
<dbReference type="InterPro" id="IPR001048">
    <property type="entry name" value="Asp/Glu/Uridylate_kinase"/>
</dbReference>
<dbReference type="InterPro" id="IPR011817">
    <property type="entry name" value="Uridylate_kinase"/>
</dbReference>
<dbReference type="InterPro" id="IPR015963">
    <property type="entry name" value="Uridylate_kinase_bac"/>
</dbReference>
<dbReference type="NCBIfam" id="TIGR02075">
    <property type="entry name" value="pyrH_bact"/>
    <property type="match status" value="1"/>
</dbReference>
<dbReference type="PANTHER" id="PTHR42833">
    <property type="entry name" value="URIDYLATE KINASE"/>
    <property type="match status" value="1"/>
</dbReference>
<dbReference type="PANTHER" id="PTHR42833:SF4">
    <property type="entry name" value="URIDYLATE KINASE PUMPKIN, CHLOROPLASTIC"/>
    <property type="match status" value="1"/>
</dbReference>
<dbReference type="Pfam" id="PF00696">
    <property type="entry name" value="AA_kinase"/>
    <property type="match status" value="1"/>
</dbReference>
<dbReference type="PIRSF" id="PIRSF005650">
    <property type="entry name" value="Uridylate_kin"/>
    <property type="match status" value="1"/>
</dbReference>
<dbReference type="SUPFAM" id="SSF53633">
    <property type="entry name" value="Carbamate kinase-like"/>
    <property type="match status" value="1"/>
</dbReference>
<reference key="1">
    <citation type="submission" date="2007-04" db="EMBL/GenBank/DDBJ databases">
        <title>Complete sequence of Shewanella putrefaciens CN-32.</title>
        <authorList>
            <consortium name="US DOE Joint Genome Institute"/>
            <person name="Copeland A."/>
            <person name="Lucas S."/>
            <person name="Lapidus A."/>
            <person name="Barry K."/>
            <person name="Detter J.C."/>
            <person name="Glavina del Rio T."/>
            <person name="Hammon N."/>
            <person name="Israni S."/>
            <person name="Dalin E."/>
            <person name="Tice H."/>
            <person name="Pitluck S."/>
            <person name="Chain P."/>
            <person name="Malfatti S."/>
            <person name="Shin M."/>
            <person name="Vergez L."/>
            <person name="Schmutz J."/>
            <person name="Larimer F."/>
            <person name="Land M."/>
            <person name="Hauser L."/>
            <person name="Kyrpides N."/>
            <person name="Mikhailova N."/>
            <person name="Romine M.F."/>
            <person name="Fredrickson J."/>
            <person name="Tiedje J."/>
            <person name="Richardson P."/>
        </authorList>
    </citation>
    <scope>NUCLEOTIDE SEQUENCE [LARGE SCALE GENOMIC DNA]</scope>
    <source>
        <strain>CN-32 / ATCC BAA-453</strain>
    </source>
</reference>
<accession>A4Y545</accession>
<gene>
    <name evidence="1" type="primary">pyrH</name>
    <name type="ordered locus">Sputcn32_1350</name>
</gene>
<sequence>MSTNPKPTFRRILLKLSGEALMGEEGFGIDPKVLDRMAQEVKELVELGIQVGVVIGGGNLFRGEGLAKAGMNRVVGDHMGMLATVMNGLAMRDALHRAYVNARLMSAIPLKGVCDDYNWAEAISLLKSGRVVIFAAGTGNPFCTTDSAACLRGIEIEAEVVLKGTKVDGVYSDDPMKNPDAVKYDELSYSEILEKELKVMDLAAFTMARDHDMPILVFNMNKPGALRRVIMGEEEGTLIRAKKVI</sequence>
<evidence type="ECO:0000255" key="1">
    <source>
        <dbReference type="HAMAP-Rule" id="MF_01220"/>
    </source>
</evidence>
<organism>
    <name type="scientific">Shewanella putrefaciens (strain CN-32 / ATCC BAA-453)</name>
    <dbReference type="NCBI Taxonomy" id="319224"/>
    <lineage>
        <taxon>Bacteria</taxon>
        <taxon>Pseudomonadati</taxon>
        <taxon>Pseudomonadota</taxon>
        <taxon>Gammaproteobacteria</taxon>
        <taxon>Alteromonadales</taxon>
        <taxon>Shewanellaceae</taxon>
        <taxon>Shewanella</taxon>
    </lineage>
</organism>
<keyword id="KW-0021">Allosteric enzyme</keyword>
<keyword id="KW-0067">ATP-binding</keyword>
<keyword id="KW-0963">Cytoplasm</keyword>
<keyword id="KW-0418">Kinase</keyword>
<keyword id="KW-0547">Nucleotide-binding</keyword>
<keyword id="KW-0665">Pyrimidine biosynthesis</keyword>
<keyword id="KW-0808">Transferase</keyword>
<protein>
    <recommendedName>
        <fullName evidence="1">Uridylate kinase</fullName>
        <shortName evidence="1">UK</shortName>
        <ecNumber evidence="1">2.7.4.22</ecNumber>
    </recommendedName>
    <alternativeName>
        <fullName evidence="1">Uridine monophosphate kinase</fullName>
        <shortName evidence="1">UMP kinase</shortName>
        <shortName evidence="1">UMPK</shortName>
    </alternativeName>
</protein>
<feature type="chain" id="PRO_1000054011" description="Uridylate kinase">
    <location>
        <begin position="1"/>
        <end position="245"/>
    </location>
</feature>
<feature type="region of interest" description="Involved in allosteric activation by GTP" evidence="1">
    <location>
        <begin position="23"/>
        <end position="28"/>
    </location>
</feature>
<feature type="binding site" evidence="1">
    <location>
        <begin position="15"/>
        <end position="18"/>
    </location>
    <ligand>
        <name>ATP</name>
        <dbReference type="ChEBI" id="CHEBI:30616"/>
    </ligand>
</feature>
<feature type="binding site" evidence="1">
    <location>
        <position position="57"/>
    </location>
    <ligand>
        <name>UMP</name>
        <dbReference type="ChEBI" id="CHEBI:57865"/>
    </ligand>
</feature>
<feature type="binding site" evidence="1">
    <location>
        <position position="58"/>
    </location>
    <ligand>
        <name>ATP</name>
        <dbReference type="ChEBI" id="CHEBI:30616"/>
    </ligand>
</feature>
<feature type="binding site" evidence="1">
    <location>
        <position position="62"/>
    </location>
    <ligand>
        <name>ATP</name>
        <dbReference type="ChEBI" id="CHEBI:30616"/>
    </ligand>
</feature>
<feature type="binding site" evidence="1">
    <location>
        <position position="77"/>
    </location>
    <ligand>
        <name>UMP</name>
        <dbReference type="ChEBI" id="CHEBI:57865"/>
    </ligand>
</feature>
<feature type="binding site" evidence="1">
    <location>
        <begin position="138"/>
        <end position="145"/>
    </location>
    <ligand>
        <name>UMP</name>
        <dbReference type="ChEBI" id="CHEBI:57865"/>
    </ligand>
</feature>
<feature type="binding site" evidence="1">
    <location>
        <position position="165"/>
    </location>
    <ligand>
        <name>ATP</name>
        <dbReference type="ChEBI" id="CHEBI:30616"/>
    </ligand>
</feature>
<feature type="binding site" evidence="1">
    <location>
        <position position="171"/>
    </location>
    <ligand>
        <name>ATP</name>
        <dbReference type="ChEBI" id="CHEBI:30616"/>
    </ligand>
</feature>
<feature type="binding site" evidence="1">
    <location>
        <position position="174"/>
    </location>
    <ligand>
        <name>ATP</name>
        <dbReference type="ChEBI" id="CHEBI:30616"/>
    </ligand>
</feature>
<proteinExistence type="inferred from homology"/>